<name>FB239_ARATH</name>
<evidence type="ECO:0000256" key="1">
    <source>
        <dbReference type="SAM" id="MobiDB-lite"/>
    </source>
</evidence>
<gene>
    <name type="ordered locus">At4g21240</name>
    <name type="ORF">F7J7.180</name>
</gene>
<proteinExistence type="predicted"/>
<sequence>MDRREEEEEETGYGEKGTRNQSKEDESRLGKIFELIPLDMIPDILLRLPAKSAVRFRIVSKLWLSITTRPYFIRSFAFPSSTRLCLMACVKARDMRLFISLHQHDDGSYAHVDRCEIKSPKHDYYNPSSESVNGLVCFGDFYNIVVWNPSMRQHVTLPEPKPHSTVRYFIRSCLGYDPVEDKYKVLSISGYHNGNHDPLVFTLGPQESWRVIQNSPLDIPLPTGGSRVGTCINGHVYYEAQIRFKVDDIFNFENILMSFDVRYEKFNTIKKPADPTLRNFMLNYQGKLAWFCSDYSSIRFWVLDDGDKQEWSLKNFILPFPISPEIDPIFECRVMLTGVTHDTGEFIFINATMCDAFCVLYYDPKSGSERRIEYEGIGDREFCINTGILECKRFTIDWFPNHNESLMSLVNVLKKAD</sequence>
<keyword id="KW-1185">Reference proteome</keyword>
<dbReference type="EMBL" id="AL021960">
    <property type="protein sequence ID" value="CAA17543.1"/>
    <property type="molecule type" value="Genomic_DNA"/>
</dbReference>
<dbReference type="EMBL" id="AL161554">
    <property type="protein sequence ID" value="CAB79124.1"/>
    <property type="molecule type" value="Genomic_DNA"/>
</dbReference>
<dbReference type="EMBL" id="CP002687">
    <property type="protein sequence ID" value="AEE84431.1"/>
    <property type="molecule type" value="Genomic_DNA"/>
</dbReference>
<dbReference type="PIR" id="T04955">
    <property type="entry name" value="T04955"/>
</dbReference>
<dbReference type="RefSeq" id="NP_193856.1">
    <property type="nucleotide sequence ID" value="NM_118243.1"/>
</dbReference>
<dbReference type="SMR" id="O49565"/>
<dbReference type="FunCoup" id="O49565">
    <property type="interactions" value="16"/>
</dbReference>
<dbReference type="STRING" id="3702.O49565"/>
<dbReference type="PaxDb" id="3702-AT4G21240.1"/>
<dbReference type="EnsemblPlants" id="AT4G21240.1">
    <property type="protein sequence ID" value="AT4G21240.1"/>
    <property type="gene ID" value="AT4G21240"/>
</dbReference>
<dbReference type="GeneID" id="827873"/>
<dbReference type="Gramene" id="AT4G21240.1">
    <property type="protein sequence ID" value="AT4G21240.1"/>
    <property type="gene ID" value="AT4G21240"/>
</dbReference>
<dbReference type="KEGG" id="ath:AT4G21240"/>
<dbReference type="Araport" id="AT4G21240"/>
<dbReference type="TAIR" id="AT4G21240"/>
<dbReference type="HOGENOM" id="CLU_027176_8_0_1"/>
<dbReference type="InParanoid" id="O49565"/>
<dbReference type="OMA" id="NHNESLM"/>
<dbReference type="PhylomeDB" id="O49565"/>
<dbReference type="PRO" id="PR:O49565"/>
<dbReference type="Proteomes" id="UP000006548">
    <property type="component" value="Chromosome 4"/>
</dbReference>
<dbReference type="ExpressionAtlas" id="O49565">
    <property type="expression patterns" value="baseline and differential"/>
</dbReference>
<dbReference type="InterPro" id="IPR013187">
    <property type="entry name" value="F-box-assoc_dom_typ3"/>
</dbReference>
<dbReference type="InterPro" id="IPR017451">
    <property type="entry name" value="F-box-assoc_interact_dom"/>
</dbReference>
<dbReference type="InterPro" id="IPR036047">
    <property type="entry name" value="F-box-like_dom_sf"/>
</dbReference>
<dbReference type="InterPro" id="IPR001810">
    <property type="entry name" value="F-box_dom"/>
</dbReference>
<dbReference type="NCBIfam" id="TIGR01640">
    <property type="entry name" value="F_box_assoc_1"/>
    <property type="match status" value="1"/>
</dbReference>
<dbReference type="PANTHER" id="PTHR31111">
    <property type="entry name" value="BNAA05G37150D PROTEIN-RELATED"/>
    <property type="match status" value="1"/>
</dbReference>
<dbReference type="PANTHER" id="PTHR31111:SF43">
    <property type="entry name" value="F-BOX ASSOCIATED UBIQUITINATION EFFECTOR FAMILY PROTEIN"/>
    <property type="match status" value="1"/>
</dbReference>
<dbReference type="Pfam" id="PF00646">
    <property type="entry name" value="F-box"/>
    <property type="match status" value="1"/>
</dbReference>
<dbReference type="Pfam" id="PF08268">
    <property type="entry name" value="FBA_3"/>
    <property type="match status" value="1"/>
</dbReference>
<dbReference type="SMART" id="SM00256">
    <property type="entry name" value="FBOX"/>
    <property type="match status" value="1"/>
</dbReference>
<dbReference type="SUPFAM" id="SSF81383">
    <property type="entry name" value="F-box domain"/>
    <property type="match status" value="1"/>
</dbReference>
<organism>
    <name type="scientific">Arabidopsis thaliana</name>
    <name type="common">Mouse-ear cress</name>
    <dbReference type="NCBI Taxonomy" id="3702"/>
    <lineage>
        <taxon>Eukaryota</taxon>
        <taxon>Viridiplantae</taxon>
        <taxon>Streptophyta</taxon>
        <taxon>Embryophyta</taxon>
        <taxon>Tracheophyta</taxon>
        <taxon>Spermatophyta</taxon>
        <taxon>Magnoliopsida</taxon>
        <taxon>eudicotyledons</taxon>
        <taxon>Gunneridae</taxon>
        <taxon>Pentapetalae</taxon>
        <taxon>rosids</taxon>
        <taxon>malvids</taxon>
        <taxon>Brassicales</taxon>
        <taxon>Brassicaceae</taxon>
        <taxon>Camelineae</taxon>
        <taxon>Arabidopsis</taxon>
    </lineage>
</organism>
<feature type="chain" id="PRO_0000283506" description="Putative F-box protein At4g21240">
    <location>
        <begin position="1"/>
        <end position="417"/>
    </location>
</feature>
<feature type="domain" description="F-box">
    <location>
        <begin position="30"/>
        <end position="76"/>
    </location>
</feature>
<feature type="region of interest" description="Disordered" evidence="1">
    <location>
        <begin position="1"/>
        <end position="25"/>
    </location>
</feature>
<feature type="compositionally biased region" description="Acidic residues" evidence="1">
    <location>
        <begin position="1"/>
        <end position="12"/>
    </location>
</feature>
<feature type="compositionally biased region" description="Basic and acidic residues" evidence="1">
    <location>
        <begin position="16"/>
        <end position="25"/>
    </location>
</feature>
<protein>
    <recommendedName>
        <fullName>Putative F-box protein At4g21240</fullName>
    </recommendedName>
</protein>
<accession>O49565</accession>
<reference key="1">
    <citation type="journal article" date="1999" name="Nature">
        <title>Sequence and analysis of chromosome 4 of the plant Arabidopsis thaliana.</title>
        <authorList>
            <person name="Mayer K.F.X."/>
            <person name="Schueller C."/>
            <person name="Wambutt R."/>
            <person name="Murphy G."/>
            <person name="Volckaert G."/>
            <person name="Pohl T."/>
            <person name="Duesterhoeft A."/>
            <person name="Stiekema W."/>
            <person name="Entian K.-D."/>
            <person name="Terryn N."/>
            <person name="Harris B."/>
            <person name="Ansorge W."/>
            <person name="Brandt P."/>
            <person name="Grivell L.A."/>
            <person name="Rieger M."/>
            <person name="Weichselgartner M."/>
            <person name="de Simone V."/>
            <person name="Obermaier B."/>
            <person name="Mache R."/>
            <person name="Mueller M."/>
            <person name="Kreis M."/>
            <person name="Delseny M."/>
            <person name="Puigdomenech P."/>
            <person name="Watson M."/>
            <person name="Schmidtheini T."/>
            <person name="Reichert B."/>
            <person name="Portetelle D."/>
            <person name="Perez-Alonso M."/>
            <person name="Boutry M."/>
            <person name="Bancroft I."/>
            <person name="Vos P."/>
            <person name="Hoheisel J."/>
            <person name="Zimmermann W."/>
            <person name="Wedler H."/>
            <person name="Ridley P."/>
            <person name="Langham S.-A."/>
            <person name="McCullagh B."/>
            <person name="Bilham L."/>
            <person name="Robben J."/>
            <person name="van der Schueren J."/>
            <person name="Grymonprez B."/>
            <person name="Chuang Y.-J."/>
            <person name="Vandenbussche F."/>
            <person name="Braeken M."/>
            <person name="Weltjens I."/>
            <person name="Voet M."/>
            <person name="Bastiaens I."/>
            <person name="Aert R."/>
            <person name="Defoor E."/>
            <person name="Weitzenegger T."/>
            <person name="Bothe G."/>
            <person name="Ramsperger U."/>
            <person name="Hilbert H."/>
            <person name="Braun M."/>
            <person name="Holzer E."/>
            <person name="Brandt A."/>
            <person name="Peters S."/>
            <person name="van Staveren M."/>
            <person name="Dirkse W."/>
            <person name="Mooijman P."/>
            <person name="Klein Lankhorst R."/>
            <person name="Rose M."/>
            <person name="Hauf J."/>
            <person name="Koetter P."/>
            <person name="Berneiser S."/>
            <person name="Hempel S."/>
            <person name="Feldpausch M."/>
            <person name="Lamberth S."/>
            <person name="Van den Daele H."/>
            <person name="De Keyser A."/>
            <person name="Buysshaert C."/>
            <person name="Gielen J."/>
            <person name="Villarroel R."/>
            <person name="De Clercq R."/>
            <person name="van Montagu M."/>
            <person name="Rogers J."/>
            <person name="Cronin A."/>
            <person name="Quail M.A."/>
            <person name="Bray-Allen S."/>
            <person name="Clark L."/>
            <person name="Doggett J."/>
            <person name="Hall S."/>
            <person name="Kay M."/>
            <person name="Lennard N."/>
            <person name="McLay K."/>
            <person name="Mayes R."/>
            <person name="Pettett A."/>
            <person name="Rajandream M.A."/>
            <person name="Lyne M."/>
            <person name="Benes V."/>
            <person name="Rechmann S."/>
            <person name="Borkova D."/>
            <person name="Bloecker H."/>
            <person name="Scharfe M."/>
            <person name="Grimm M."/>
            <person name="Loehnert T.-H."/>
            <person name="Dose S."/>
            <person name="de Haan M."/>
            <person name="Maarse A.C."/>
            <person name="Schaefer M."/>
            <person name="Mueller-Auer S."/>
            <person name="Gabel C."/>
            <person name="Fuchs M."/>
            <person name="Fartmann B."/>
            <person name="Granderath K."/>
            <person name="Dauner D."/>
            <person name="Herzl A."/>
            <person name="Neumann S."/>
            <person name="Argiriou A."/>
            <person name="Vitale D."/>
            <person name="Liguori R."/>
            <person name="Piravandi E."/>
            <person name="Massenet O."/>
            <person name="Quigley F."/>
            <person name="Clabauld G."/>
            <person name="Muendlein A."/>
            <person name="Felber R."/>
            <person name="Schnabl S."/>
            <person name="Hiller R."/>
            <person name="Schmidt W."/>
            <person name="Lecharny A."/>
            <person name="Aubourg S."/>
            <person name="Chefdor F."/>
            <person name="Cooke R."/>
            <person name="Berger C."/>
            <person name="Monfort A."/>
            <person name="Casacuberta E."/>
            <person name="Gibbons T."/>
            <person name="Weber N."/>
            <person name="Vandenbol M."/>
            <person name="Bargues M."/>
            <person name="Terol J."/>
            <person name="Torres A."/>
            <person name="Perez-Perez A."/>
            <person name="Purnelle B."/>
            <person name="Bent E."/>
            <person name="Johnson S."/>
            <person name="Tacon D."/>
            <person name="Jesse T."/>
            <person name="Heijnen L."/>
            <person name="Schwarz S."/>
            <person name="Scholler P."/>
            <person name="Heber S."/>
            <person name="Francs P."/>
            <person name="Bielke C."/>
            <person name="Frishman D."/>
            <person name="Haase D."/>
            <person name="Lemcke K."/>
            <person name="Mewes H.-W."/>
            <person name="Stocker S."/>
            <person name="Zaccaria P."/>
            <person name="Bevan M."/>
            <person name="Wilson R.K."/>
            <person name="de la Bastide M."/>
            <person name="Habermann K."/>
            <person name="Parnell L."/>
            <person name="Dedhia N."/>
            <person name="Gnoj L."/>
            <person name="Schutz K."/>
            <person name="Huang E."/>
            <person name="Spiegel L."/>
            <person name="Sekhon M."/>
            <person name="Murray J."/>
            <person name="Sheet P."/>
            <person name="Cordes M."/>
            <person name="Abu-Threideh J."/>
            <person name="Stoneking T."/>
            <person name="Kalicki J."/>
            <person name="Graves T."/>
            <person name="Harmon G."/>
            <person name="Edwards J."/>
            <person name="Latreille P."/>
            <person name="Courtney L."/>
            <person name="Cloud J."/>
            <person name="Abbott A."/>
            <person name="Scott K."/>
            <person name="Johnson D."/>
            <person name="Minx P."/>
            <person name="Bentley D."/>
            <person name="Fulton B."/>
            <person name="Miller N."/>
            <person name="Greco T."/>
            <person name="Kemp K."/>
            <person name="Kramer J."/>
            <person name="Fulton L."/>
            <person name="Mardis E."/>
            <person name="Dante M."/>
            <person name="Pepin K."/>
            <person name="Hillier L.W."/>
            <person name="Nelson J."/>
            <person name="Spieth J."/>
            <person name="Ryan E."/>
            <person name="Andrews S."/>
            <person name="Geisel C."/>
            <person name="Layman D."/>
            <person name="Du H."/>
            <person name="Ali J."/>
            <person name="Berghoff A."/>
            <person name="Jones K."/>
            <person name="Drone K."/>
            <person name="Cotton M."/>
            <person name="Joshu C."/>
            <person name="Antonoiu B."/>
            <person name="Zidanic M."/>
            <person name="Strong C."/>
            <person name="Sun H."/>
            <person name="Lamar B."/>
            <person name="Yordan C."/>
            <person name="Ma P."/>
            <person name="Zhong J."/>
            <person name="Preston R."/>
            <person name="Vil D."/>
            <person name="Shekher M."/>
            <person name="Matero A."/>
            <person name="Shah R."/>
            <person name="Swaby I.K."/>
            <person name="O'Shaughnessy A."/>
            <person name="Rodriguez M."/>
            <person name="Hoffman J."/>
            <person name="Till S."/>
            <person name="Granat S."/>
            <person name="Shohdy N."/>
            <person name="Hasegawa A."/>
            <person name="Hameed A."/>
            <person name="Lodhi M."/>
            <person name="Johnson A."/>
            <person name="Chen E."/>
            <person name="Marra M.A."/>
            <person name="Martienssen R."/>
            <person name="McCombie W.R."/>
        </authorList>
    </citation>
    <scope>NUCLEOTIDE SEQUENCE [LARGE SCALE GENOMIC DNA]</scope>
    <source>
        <strain>cv. Columbia</strain>
    </source>
</reference>
<reference key="2">
    <citation type="journal article" date="2017" name="Plant J.">
        <title>Araport11: a complete reannotation of the Arabidopsis thaliana reference genome.</title>
        <authorList>
            <person name="Cheng C.Y."/>
            <person name="Krishnakumar V."/>
            <person name="Chan A.P."/>
            <person name="Thibaud-Nissen F."/>
            <person name="Schobel S."/>
            <person name="Town C.D."/>
        </authorList>
    </citation>
    <scope>GENOME REANNOTATION</scope>
    <source>
        <strain>cv. Columbia</strain>
    </source>
</reference>